<proteinExistence type="inferred from homology"/>
<name>DEF_CHLPN</name>
<gene>
    <name evidence="1" type="primary">def</name>
    <name type="ordered locus">CPn_1067</name>
    <name type="ordered locus">CP_0783</name>
    <name type="ordered locus">CpB1111</name>
</gene>
<reference key="1">
    <citation type="journal article" date="1999" name="Nat. Genet.">
        <title>Comparative genomes of Chlamydia pneumoniae and C. trachomatis.</title>
        <authorList>
            <person name="Kalman S."/>
            <person name="Mitchell W.P."/>
            <person name="Marathe R."/>
            <person name="Lammel C.J."/>
            <person name="Fan J."/>
            <person name="Hyman R.W."/>
            <person name="Olinger L."/>
            <person name="Grimwood J."/>
            <person name="Davis R.W."/>
            <person name="Stephens R.S."/>
        </authorList>
    </citation>
    <scope>NUCLEOTIDE SEQUENCE [LARGE SCALE GENOMIC DNA]</scope>
    <source>
        <strain>CWL029</strain>
    </source>
</reference>
<reference key="2">
    <citation type="journal article" date="2000" name="Nucleic Acids Res.">
        <title>Genome sequences of Chlamydia trachomatis MoPn and Chlamydia pneumoniae AR39.</title>
        <authorList>
            <person name="Read T.D."/>
            <person name="Brunham R.C."/>
            <person name="Shen C."/>
            <person name="Gill S.R."/>
            <person name="Heidelberg J.F."/>
            <person name="White O."/>
            <person name="Hickey E.K."/>
            <person name="Peterson J.D."/>
            <person name="Utterback T.R."/>
            <person name="Berry K.J."/>
            <person name="Bass S."/>
            <person name="Linher K.D."/>
            <person name="Weidman J.F."/>
            <person name="Khouri H.M."/>
            <person name="Craven B."/>
            <person name="Bowman C."/>
            <person name="Dodson R.J."/>
            <person name="Gwinn M.L."/>
            <person name="Nelson W.C."/>
            <person name="DeBoy R.T."/>
            <person name="Kolonay J.F."/>
            <person name="McClarty G."/>
            <person name="Salzberg S.L."/>
            <person name="Eisen J.A."/>
            <person name="Fraser C.M."/>
        </authorList>
    </citation>
    <scope>NUCLEOTIDE SEQUENCE [LARGE SCALE GENOMIC DNA]</scope>
    <source>
        <strain>AR39</strain>
    </source>
</reference>
<reference key="3">
    <citation type="journal article" date="2000" name="Nucleic Acids Res.">
        <title>Comparison of whole genome sequences of Chlamydia pneumoniae J138 from Japan and CWL029 from USA.</title>
        <authorList>
            <person name="Shirai M."/>
            <person name="Hirakawa H."/>
            <person name="Kimoto M."/>
            <person name="Tabuchi M."/>
            <person name="Kishi F."/>
            <person name="Ouchi K."/>
            <person name="Shiba T."/>
            <person name="Ishii K."/>
            <person name="Hattori M."/>
            <person name="Kuhara S."/>
            <person name="Nakazawa T."/>
        </authorList>
    </citation>
    <scope>NUCLEOTIDE SEQUENCE [LARGE SCALE GENOMIC DNA]</scope>
    <source>
        <strain>J138</strain>
    </source>
</reference>
<reference key="4">
    <citation type="submission" date="2002-05" db="EMBL/GenBank/DDBJ databases">
        <title>The genome sequence of Chlamydia pneumoniae TW183 and comparison with other Chlamydia strains based on whole genome sequence analysis.</title>
        <authorList>
            <person name="Geng M.M."/>
            <person name="Schuhmacher A."/>
            <person name="Muehldorfer I."/>
            <person name="Bensch K.W."/>
            <person name="Schaefer K.P."/>
            <person name="Schneider S."/>
            <person name="Pohl T."/>
            <person name="Essig A."/>
            <person name="Marre R."/>
            <person name="Melchers K."/>
        </authorList>
    </citation>
    <scope>NUCLEOTIDE SEQUENCE [LARGE SCALE GENOMIC DNA]</scope>
    <source>
        <strain>TW-183</strain>
    </source>
</reference>
<feature type="chain" id="PRO_0000082762" description="Peptide deformylase">
    <location>
        <begin position="1"/>
        <end position="186"/>
    </location>
</feature>
<feature type="active site" evidence="1">
    <location>
        <position position="142"/>
    </location>
</feature>
<feature type="binding site" evidence="1">
    <location>
        <position position="99"/>
    </location>
    <ligand>
        <name>Fe cation</name>
        <dbReference type="ChEBI" id="CHEBI:24875"/>
    </ligand>
</feature>
<feature type="binding site" evidence="1">
    <location>
        <position position="141"/>
    </location>
    <ligand>
        <name>Fe cation</name>
        <dbReference type="ChEBI" id="CHEBI:24875"/>
    </ligand>
</feature>
<feature type="binding site" evidence="1">
    <location>
        <position position="145"/>
    </location>
    <ligand>
        <name>Fe cation</name>
        <dbReference type="ChEBI" id="CHEBI:24875"/>
    </ligand>
</feature>
<comment type="function">
    <text evidence="1">Removes the formyl group from the N-terminal Met of newly synthesized proteins. Requires at least a dipeptide for an efficient rate of reaction. N-terminal L-methionine is a prerequisite for activity but the enzyme has broad specificity at other positions.</text>
</comment>
<comment type="catalytic activity">
    <reaction evidence="1">
        <text>N-terminal N-formyl-L-methionyl-[peptide] + H2O = N-terminal L-methionyl-[peptide] + formate</text>
        <dbReference type="Rhea" id="RHEA:24420"/>
        <dbReference type="Rhea" id="RHEA-COMP:10639"/>
        <dbReference type="Rhea" id="RHEA-COMP:10640"/>
        <dbReference type="ChEBI" id="CHEBI:15377"/>
        <dbReference type="ChEBI" id="CHEBI:15740"/>
        <dbReference type="ChEBI" id="CHEBI:49298"/>
        <dbReference type="ChEBI" id="CHEBI:64731"/>
        <dbReference type="EC" id="3.5.1.88"/>
    </reaction>
</comment>
<comment type="cofactor">
    <cofactor evidence="1">
        <name>Fe(2+)</name>
        <dbReference type="ChEBI" id="CHEBI:29033"/>
    </cofactor>
    <text evidence="1">Binds 1 Fe(2+) ion.</text>
</comment>
<comment type="similarity">
    <text evidence="1">Belongs to the polypeptide deformylase family.</text>
</comment>
<comment type="sequence caution" evidence="2">
    <conflict type="erroneous initiation">
        <sequence resource="EMBL-CDS" id="AAP99039"/>
    </conflict>
</comment>
<sequence>MIRRLEYYGSPILRKKSSPIAEITDEIRNLVSDMCDTMEAHRGVGLAAPQVGKNVSLFVMCVDRETEDGELIFSESPRVFINPVLSDPSETPIIGKEGCLSIPGLRGEVFRPQKITVTAMDLNGKIFTEHLEGFTARIIMHETDHLNGVLYIDLMEEPKDPKKFKASLEKIKRRYNTHLSKEELVS</sequence>
<organism>
    <name type="scientific">Chlamydia pneumoniae</name>
    <name type="common">Chlamydophila pneumoniae</name>
    <dbReference type="NCBI Taxonomy" id="83558"/>
    <lineage>
        <taxon>Bacteria</taxon>
        <taxon>Pseudomonadati</taxon>
        <taxon>Chlamydiota</taxon>
        <taxon>Chlamydiia</taxon>
        <taxon>Chlamydiales</taxon>
        <taxon>Chlamydiaceae</taxon>
        <taxon>Chlamydia/Chlamydophila group</taxon>
        <taxon>Chlamydia</taxon>
    </lineage>
</organism>
<protein>
    <recommendedName>
        <fullName evidence="1">Peptide deformylase</fullName>
        <shortName evidence="1">PDF</shortName>
        <ecNumber evidence="1">3.5.1.88</ecNumber>
    </recommendedName>
    <alternativeName>
        <fullName evidence="1">Polypeptide deformylase</fullName>
    </alternativeName>
</protein>
<evidence type="ECO:0000255" key="1">
    <source>
        <dbReference type="HAMAP-Rule" id="MF_00163"/>
    </source>
</evidence>
<evidence type="ECO:0000305" key="2"/>
<keyword id="KW-0378">Hydrolase</keyword>
<keyword id="KW-0408">Iron</keyword>
<keyword id="KW-0479">Metal-binding</keyword>
<keyword id="KW-0648">Protein biosynthesis</keyword>
<accession>Q9Z6J2</accession>
<accession>Q9JQ55</accession>
<dbReference type="EC" id="3.5.1.88" evidence="1"/>
<dbReference type="EMBL" id="AE001363">
    <property type="protein sequence ID" value="AAD19204.1"/>
    <property type="molecule type" value="Genomic_DNA"/>
</dbReference>
<dbReference type="EMBL" id="AE002161">
    <property type="protein sequence ID" value="AAF38582.1"/>
    <property type="molecule type" value="Genomic_DNA"/>
</dbReference>
<dbReference type="EMBL" id="BA000008">
    <property type="protein sequence ID" value="BAA99274.1"/>
    <property type="molecule type" value="Genomic_DNA"/>
</dbReference>
<dbReference type="EMBL" id="AE009440">
    <property type="protein sequence ID" value="AAP99039.1"/>
    <property type="status" value="ALT_INIT"/>
    <property type="molecule type" value="Genomic_DNA"/>
</dbReference>
<dbReference type="PIR" id="E72000">
    <property type="entry name" value="E72000"/>
</dbReference>
<dbReference type="PIR" id="H86623">
    <property type="entry name" value="H86623"/>
</dbReference>
<dbReference type="RefSeq" id="NP_225261.1">
    <property type="nucleotide sequence ID" value="NC_000922.1"/>
</dbReference>
<dbReference type="RefSeq" id="WP_010883700.1">
    <property type="nucleotide sequence ID" value="NZ_LN847257.1"/>
</dbReference>
<dbReference type="SMR" id="Q9Z6J2"/>
<dbReference type="STRING" id="406984.CPK_ORF00492"/>
<dbReference type="GeneID" id="45051124"/>
<dbReference type="KEGG" id="cpa:CP_0783"/>
<dbReference type="KEGG" id="cpj:def"/>
<dbReference type="KEGG" id="cpn:CPn_1067"/>
<dbReference type="KEGG" id="cpt:CpB1111"/>
<dbReference type="PATRIC" id="fig|115713.3.peg.1167"/>
<dbReference type="eggNOG" id="COG0242">
    <property type="taxonomic scope" value="Bacteria"/>
</dbReference>
<dbReference type="HOGENOM" id="CLU_061901_2_0_0"/>
<dbReference type="OrthoDB" id="9784988at2"/>
<dbReference type="Proteomes" id="UP000000583">
    <property type="component" value="Chromosome"/>
</dbReference>
<dbReference type="Proteomes" id="UP000000801">
    <property type="component" value="Chromosome"/>
</dbReference>
<dbReference type="GO" id="GO:0046872">
    <property type="term" value="F:metal ion binding"/>
    <property type="evidence" value="ECO:0007669"/>
    <property type="project" value="UniProtKB-KW"/>
</dbReference>
<dbReference type="GO" id="GO:0042586">
    <property type="term" value="F:peptide deformylase activity"/>
    <property type="evidence" value="ECO:0007669"/>
    <property type="project" value="UniProtKB-UniRule"/>
</dbReference>
<dbReference type="GO" id="GO:0043686">
    <property type="term" value="P:co-translational protein modification"/>
    <property type="evidence" value="ECO:0007669"/>
    <property type="project" value="TreeGrafter"/>
</dbReference>
<dbReference type="GO" id="GO:0006412">
    <property type="term" value="P:translation"/>
    <property type="evidence" value="ECO:0007669"/>
    <property type="project" value="UniProtKB-UniRule"/>
</dbReference>
<dbReference type="CDD" id="cd00487">
    <property type="entry name" value="Pep_deformylase"/>
    <property type="match status" value="1"/>
</dbReference>
<dbReference type="Gene3D" id="3.90.45.10">
    <property type="entry name" value="Peptide deformylase"/>
    <property type="match status" value="1"/>
</dbReference>
<dbReference type="HAMAP" id="MF_00163">
    <property type="entry name" value="Pep_deformylase"/>
    <property type="match status" value="1"/>
</dbReference>
<dbReference type="InterPro" id="IPR023635">
    <property type="entry name" value="Peptide_deformylase"/>
</dbReference>
<dbReference type="InterPro" id="IPR036821">
    <property type="entry name" value="Peptide_deformylase_sf"/>
</dbReference>
<dbReference type="NCBIfam" id="TIGR00079">
    <property type="entry name" value="pept_deformyl"/>
    <property type="match status" value="1"/>
</dbReference>
<dbReference type="NCBIfam" id="NF001159">
    <property type="entry name" value="PRK00150.1-3"/>
    <property type="match status" value="1"/>
</dbReference>
<dbReference type="PANTHER" id="PTHR10458">
    <property type="entry name" value="PEPTIDE DEFORMYLASE"/>
    <property type="match status" value="1"/>
</dbReference>
<dbReference type="PANTHER" id="PTHR10458:SF22">
    <property type="entry name" value="PEPTIDE DEFORMYLASE"/>
    <property type="match status" value="1"/>
</dbReference>
<dbReference type="Pfam" id="PF01327">
    <property type="entry name" value="Pep_deformylase"/>
    <property type="match status" value="1"/>
</dbReference>
<dbReference type="PIRSF" id="PIRSF004749">
    <property type="entry name" value="Pep_def"/>
    <property type="match status" value="1"/>
</dbReference>
<dbReference type="PRINTS" id="PR01576">
    <property type="entry name" value="PDEFORMYLASE"/>
</dbReference>
<dbReference type="SUPFAM" id="SSF56420">
    <property type="entry name" value="Peptide deformylase"/>
    <property type="match status" value="1"/>
</dbReference>